<reference key="1">
    <citation type="journal article" date="2006" name="BMC Plant Biol.">
        <title>The complete chloroplast genome sequence of Citrus sinensis (L.) Osbeck var 'Ridge Pineapple': organization and phylogenetic relationships to other angiosperms.</title>
        <authorList>
            <person name="Bausher M.G."/>
            <person name="Singh N.D."/>
            <person name="Lee S.-B."/>
            <person name="Jansen R.K."/>
            <person name="Daniell H."/>
        </authorList>
    </citation>
    <scope>NUCLEOTIDE SEQUENCE [LARGE SCALE GENOMIC DNA]</scope>
    <source>
        <strain>cv. Osbeck var. Ridge Pineapple</strain>
    </source>
</reference>
<keyword id="KW-0150">Chloroplast</keyword>
<keyword id="KW-0934">Plastid</keyword>
<keyword id="KW-0687">Ribonucleoprotein</keyword>
<keyword id="KW-0689">Ribosomal protein</keyword>
<keyword id="KW-0694">RNA-binding</keyword>
<keyword id="KW-0699">rRNA-binding</keyword>
<accession>Q09MF5</accession>
<evidence type="ECO:0000255" key="1">
    <source>
        <dbReference type="HAMAP-Rule" id="MF_00382"/>
    </source>
</evidence>
<evidence type="ECO:0000305" key="2"/>
<feature type="chain" id="PRO_0000276403" description="Large ribosomal subunit protein bL20c">
    <location>
        <begin position="1"/>
        <end position="117"/>
    </location>
</feature>
<sequence length="117" mass="14112">MTRIRRGYIARRRRTKMRLFVSSFRGAHSRLSRTITQQKIRALVSAHRDRDRKKRDFRRLWITRINAVIRGNLVSYSYSRLIYNLYKAQLVLNRKILAQIAISNRNCLYMISNEIIK</sequence>
<organism>
    <name type="scientific">Citrus sinensis</name>
    <name type="common">Sweet orange</name>
    <name type="synonym">Citrus aurantium var. sinensis</name>
    <dbReference type="NCBI Taxonomy" id="2711"/>
    <lineage>
        <taxon>Eukaryota</taxon>
        <taxon>Viridiplantae</taxon>
        <taxon>Streptophyta</taxon>
        <taxon>Embryophyta</taxon>
        <taxon>Tracheophyta</taxon>
        <taxon>Spermatophyta</taxon>
        <taxon>Magnoliopsida</taxon>
        <taxon>eudicotyledons</taxon>
        <taxon>Gunneridae</taxon>
        <taxon>Pentapetalae</taxon>
        <taxon>rosids</taxon>
        <taxon>malvids</taxon>
        <taxon>Sapindales</taxon>
        <taxon>Rutaceae</taxon>
        <taxon>Aurantioideae</taxon>
        <taxon>Citrus</taxon>
    </lineage>
</organism>
<dbReference type="EMBL" id="DQ864733">
    <property type="protein sequence ID" value="ABI49043.1"/>
    <property type="molecule type" value="Genomic_DNA"/>
</dbReference>
<dbReference type="RefSeq" id="YP_740498.1">
    <property type="nucleotide sequence ID" value="NC_008334.1"/>
</dbReference>
<dbReference type="SMR" id="Q09MF5"/>
<dbReference type="GeneID" id="4271123"/>
<dbReference type="KEGG" id="cit:4271123"/>
<dbReference type="OrthoDB" id="190443at71240"/>
<dbReference type="GO" id="GO:0009507">
    <property type="term" value="C:chloroplast"/>
    <property type="evidence" value="ECO:0007669"/>
    <property type="project" value="UniProtKB-SubCell"/>
</dbReference>
<dbReference type="GO" id="GO:1990904">
    <property type="term" value="C:ribonucleoprotein complex"/>
    <property type="evidence" value="ECO:0007669"/>
    <property type="project" value="UniProtKB-KW"/>
</dbReference>
<dbReference type="GO" id="GO:0005840">
    <property type="term" value="C:ribosome"/>
    <property type="evidence" value="ECO:0007669"/>
    <property type="project" value="UniProtKB-KW"/>
</dbReference>
<dbReference type="GO" id="GO:0019843">
    <property type="term" value="F:rRNA binding"/>
    <property type="evidence" value="ECO:0007669"/>
    <property type="project" value="UniProtKB-UniRule"/>
</dbReference>
<dbReference type="GO" id="GO:0003735">
    <property type="term" value="F:structural constituent of ribosome"/>
    <property type="evidence" value="ECO:0007669"/>
    <property type="project" value="InterPro"/>
</dbReference>
<dbReference type="GO" id="GO:0000027">
    <property type="term" value="P:ribosomal large subunit assembly"/>
    <property type="evidence" value="ECO:0007669"/>
    <property type="project" value="UniProtKB-UniRule"/>
</dbReference>
<dbReference type="GO" id="GO:0006412">
    <property type="term" value="P:translation"/>
    <property type="evidence" value="ECO:0007669"/>
    <property type="project" value="InterPro"/>
</dbReference>
<dbReference type="CDD" id="cd07026">
    <property type="entry name" value="Ribosomal_L20"/>
    <property type="match status" value="1"/>
</dbReference>
<dbReference type="FunFam" id="1.10.1900.20:FF:000001">
    <property type="entry name" value="50S ribosomal protein L20"/>
    <property type="match status" value="1"/>
</dbReference>
<dbReference type="Gene3D" id="6.10.160.10">
    <property type="match status" value="1"/>
</dbReference>
<dbReference type="Gene3D" id="1.10.1900.20">
    <property type="entry name" value="Ribosomal protein L20"/>
    <property type="match status" value="1"/>
</dbReference>
<dbReference type="HAMAP" id="MF_00382">
    <property type="entry name" value="Ribosomal_bL20"/>
    <property type="match status" value="1"/>
</dbReference>
<dbReference type="InterPro" id="IPR005813">
    <property type="entry name" value="Ribosomal_bL20"/>
</dbReference>
<dbReference type="InterPro" id="IPR049946">
    <property type="entry name" value="RIBOSOMAL_L20_CS"/>
</dbReference>
<dbReference type="InterPro" id="IPR035566">
    <property type="entry name" value="Ribosomal_protein_bL20_C"/>
</dbReference>
<dbReference type="NCBIfam" id="TIGR01032">
    <property type="entry name" value="rplT_bact"/>
    <property type="match status" value="1"/>
</dbReference>
<dbReference type="PANTHER" id="PTHR10986">
    <property type="entry name" value="39S RIBOSOMAL PROTEIN L20"/>
    <property type="match status" value="1"/>
</dbReference>
<dbReference type="Pfam" id="PF00453">
    <property type="entry name" value="Ribosomal_L20"/>
    <property type="match status" value="1"/>
</dbReference>
<dbReference type="PRINTS" id="PR00062">
    <property type="entry name" value="RIBOSOMALL20"/>
</dbReference>
<dbReference type="SUPFAM" id="SSF74731">
    <property type="entry name" value="Ribosomal protein L20"/>
    <property type="match status" value="1"/>
</dbReference>
<dbReference type="PROSITE" id="PS00937">
    <property type="entry name" value="RIBOSOMAL_L20"/>
    <property type="match status" value="1"/>
</dbReference>
<gene>
    <name evidence="1" type="primary">rpl20</name>
</gene>
<name>RK20_CITSI</name>
<proteinExistence type="inferred from homology"/>
<comment type="function">
    <text evidence="1">Binds directly to 23S ribosomal RNA and is necessary for the in vitro assembly process of the 50S ribosomal subunit. It is not involved in the protein synthesizing functions of that subunit.</text>
</comment>
<comment type="subcellular location">
    <subcellularLocation>
        <location>Plastid</location>
        <location>Chloroplast</location>
    </subcellularLocation>
</comment>
<comment type="similarity">
    <text evidence="1">Belongs to the bacterial ribosomal protein bL20 family.</text>
</comment>
<geneLocation type="chloroplast"/>
<protein>
    <recommendedName>
        <fullName evidence="1">Large ribosomal subunit protein bL20c</fullName>
    </recommendedName>
    <alternativeName>
        <fullName evidence="2">50S ribosomal protein L20, chloroplastic</fullName>
    </alternativeName>
</protein>